<feature type="chain" id="PRO_0000397222" description="Borealin-2">
    <location>
        <begin position="1"/>
        <end position="312"/>
    </location>
</feature>
<feature type="region of interest" description="Disordered" evidence="3">
    <location>
        <begin position="1"/>
        <end position="26"/>
    </location>
</feature>
<feature type="compositionally biased region" description="Basic residues" evidence="3">
    <location>
        <begin position="1"/>
        <end position="10"/>
    </location>
</feature>
<feature type="compositionally biased region" description="Basic and acidic residues" evidence="3">
    <location>
        <begin position="11"/>
        <end position="26"/>
    </location>
</feature>
<reference evidence="6" key="1">
    <citation type="journal article" date="2002" name="Curr. Biol.">
        <title>A comprehensive collection of chicken cDNAs.</title>
        <authorList>
            <person name="Boardman P.E."/>
            <person name="Sanz-Ezquerro J."/>
            <person name="Overton I.M."/>
            <person name="Burt D.W."/>
            <person name="Bosch E."/>
            <person name="Fong W.T."/>
            <person name="Tickle C."/>
            <person name="Brown W.R."/>
            <person name="Wilson S.A."/>
            <person name="Hubbard S.J."/>
        </authorList>
    </citation>
    <scope>NUCLEOTIDE SEQUENCE [LARGE SCALE MRNA]</scope>
    <source>
        <strain evidence="4">White Leghorn Hisex</strain>
        <tissue evidence="4">Embryo</tissue>
        <tissue evidence="4">Head</tissue>
    </source>
</reference>
<reference evidence="6" key="2">
    <citation type="journal article" date="2004" name="Cell">
        <title>The chromosomal passenger complex is required for chromatin-induced microtubule stabilization and spindle assembly.</title>
        <authorList>
            <person name="Sampath S.C."/>
            <person name="Ohi R."/>
            <person name="Leismann O."/>
            <person name="Salic A."/>
            <person name="Pozniakovski A."/>
            <person name="Funabiki H."/>
        </authorList>
    </citation>
    <scope>IDENTIFICATION</scope>
</reference>
<evidence type="ECO:0000250" key="1">
    <source>
        <dbReference type="UniProtKB" id="Q4V7H8"/>
    </source>
</evidence>
<evidence type="ECO:0000255" key="2"/>
<evidence type="ECO:0000256" key="3">
    <source>
        <dbReference type="SAM" id="MobiDB-lite"/>
    </source>
</evidence>
<evidence type="ECO:0000269" key="4">
    <source>
    </source>
</evidence>
<evidence type="ECO:0000303" key="5">
    <source>
    </source>
</evidence>
<evidence type="ECO:0000305" key="6"/>
<protein>
    <recommendedName>
        <fullName evidence="1">Borealin-2</fullName>
    </recommendedName>
    <alternativeName>
        <fullName evidence="1">Cell division cycle-associated protein 9</fullName>
    </alternativeName>
    <alternativeName>
        <fullName evidence="5">Dasra-A</fullName>
        <shortName evidence="5">GgDasraA</shortName>
    </alternativeName>
</protein>
<sequence>MPPRKAPAKRRSTDSGVERDRGALSQEKKDQRIALFLSDFDQQAKESIREMKKELDLLLQMAEKAFMVELLKMPTAIRKMKRKDLLNLQEGEEVALAAAATDCALEDVPSPKVTRTNSKKVKVTTIVEYEDAKYTSTKKIPKKVSKSKSLVSLSSGLNSKLHSLSRSVYSSTSVNEAVKTPASDCSATNFKAMPKVSKSAGLQQAVSRTVPTSERVQGMVLRSKSVPQDKMVPFVNIPLADGQTLCMAGGDLRNIDVQLLNQDTVQHIHNLVVSLNQQTCIPTHSSTLSCEINVPGADSSCVFLLRLRNTSD</sequence>
<gene>
    <name evidence="1" type="primary">CDCA9</name>
</gene>
<comment type="function">
    <text evidence="1">Component of the chromosomal passenger complex (CPC), a complex that acts as a key regulator of mitosis. The CPC complex has essential functions at the centromere in ensuring correct chromosome alignment and segregation and is required for chromatin-induced microtubule stabilization and spindle assembly (By similarity).</text>
</comment>
<comment type="subunit">
    <text evidence="1">Component of the CPC complex.</text>
</comment>
<comment type="subcellular location">
    <subcellularLocation>
        <location evidence="1">Nucleus</location>
    </subcellularLocation>
    <subcellularLocation>
        <location evidence="1">Chromosome</location>
        <location evidence="1">Centromere</location>
    </subcellularLocation>
    <text evidence="1">Localizes on chromosome arms and inner centromeres from prophase through metaphase and then transferring to the spindle midzone and midbody from anaphase through cytokinesis.</text>
</comment>
<comment type="similarity">
    <text evidence="2">Belongs to the borealin family.</text>
</comment>
<organism>
    <name type="scientific">Gallus gallus</name>
    <name type="common">Chicken</name>
    <dbReference type="NCBI Taxonomy" id="9031"/>
    <lineage>
        <taxon>Eukaryota</taxon>
        <taxon>Metazoa</taxon>
        <taxon>Chordata</taxon>
        <taxon>Craniata</taxon>
        <taxon>Vertebrata</taxon>
        <taxon>Euteleostomi</taxon>
        <taxon>Archelosauria</taxon>
        <taxon>Archosauria</taxon>
        <taxon>Dinosauria</taxon>
        <taxon>Saurischia</taxon>
        <taxon>Theropoda</taxon>
        <taxon>Coelurosauria</taxon>
        <taxon>Aves</taxon>
        <taxon>Neognathae</taxon>
        <taxon>Galloanserae</taxon>
        <taxon>Galliformes</taxon>
        <taxon>Phasianidae</taxon>
        <taxon>Phasianinae</taxon>
        <taxon>Gallus</taxon>
    </lineage>
</organism>
<keyword id="KW-0131">Cell cycle</keyword>
<keyword id="KW-0132">Cell division</keyword>
<keyword id="KW-0137">Centromere</keyword>
<keyword id="KW-0158">Chromosome</keyword>
<keyword id="KW-0498">Mitosis</keyword>
<keyword id="KW-0539">Nucleus</keyword>
<keyword id="KW-1185">Reference proteome</keyword>
<proteinExistence type="evidence at transcript level"/>
<accession>P86345</accession>
<name>BORE2_CHICK</name>
<dbReference type="EMBL" id="BU204597">
    <property type="status" value="NOT_ANNOTATED_CDS"/>
    <property type="molecule type" value="mRNA"/>
</dbReference>
<dbReference type="EMBL" id="BU225566">
    <property type="status" value="NOT_ANNOTATED_CDS"/>
    <property type="molecule type" value="mRNA"/>
</dbReference>
<dbReference type="EMBL" id="BU225870">
    <property type="status" value="NOT_ANNOTATED_CDS"/>
    <property type="molecule type" value="mRNA"/>
</dbReference>
<dbReference type="EMBL" id="BU328206">
    <property type="status" value="NOT_ANNOTATED_CDS"/>
    <property type="molecule type" value="mRNA"/>
</dbReference>
<dbReference type="SMR" id="P86345"/>
<dbReference type="STRING" id="9031.ENSGALP00000048293"/>
<dbReference type="PaxDb" id="9031-ENSGALP00000033552"/>
<dbReference type="VEuPathDB" id="HostDB:geneid_415745"/>
<dbReference type="eggNOG" id="ENOG502S23P">
    <property type="taxonomic scope" value="Eukaryota"/>
</dbReference>
<dbReference type="InParanoid" id="P86345"/>
<dbReference type="OrthoDB" id="6360905at2759"/>
<dbReference type="PhylomeDB" id="P86345"/>
<dbReference type="Proteomes" id="UP000000539">
    <property type="component" value="Unassembled WGS sequence"/>
</dbReference>
<dbReference type="GO" id="GO:0032133">
    <property type="term" value="C:chromosome passenger complex"/>
    <property type="evidence" value="ECO:0000318"/>
    <property type="project" value="GO_Central"/>
</dbReference>
<dbReference type="GO" id="GO:0000775">
    <property type="term" value="C:chromosome, centromeric region"/>
    <property type="evidence" value="ECO:0000318"/>
    <property type="project" value="GO_Central"/>
</dbReference>
<dbReference type="GO" id="GO:0005634">
    <property type="term" value="C:nucleus"/>
    <property type="evidence" value="ECO:0007669"/>
    <property type="project" value="UniProtKB-SubCell"/>
</dbReference>
<dbReference type="GO" id="GO:0051233">
    <property type="term" value="C:spindle midzone"/>
    <property type="evidence" value="ECO:0000318"/>
    <property type="project" value="GO_Central"/>
</dbReference>
<dbReference type="GO" id="GO:0051301">
    <property type="term" value="P:cell division"/>
    <property type="evidence" value="ECO:0007669"/>
    <property type="project" value="UniProtKB-KW"/>
</dbReference>
<dbReference type="GO" id="GO:0000070">
    <property type="term" value="P:mitotic sister chromatid segregation"/>
    <property type="evidence" value="ECO:0000318"/>
    <property type="project" value="GO_Central"/>
</dbReference>
<dbReference type="Gene3D" id="6.10.140.560">
    <property type="match status" value="1"/>
</dbReference>
<dbReference type="Gene3D" id="6.10.250.1900">
    <property type="match status" value="1"/>
</dbReference>
<dbReference type="InterPro" id="IPR046466">
    <property type="entry name" value="Borealin_C"/>
</dbReference>
<dbReference type="InterPro" id="IPR018851">
    <property type="entry name" value="Borealin_N"/>
</dbReference>
<dbReference type="InterPro" id="IPR018867">
    <property type="entry name" value="Cell_div_borealin"/>
</dbReference>
<dbReference type="PANTHER" id="PTHR16040">
    <property type="entry name" value="AUSTRALIN, ISOFORM A-RELATED"/>
    <property type="match status" value="1"/>
</dbReference>
<dbReference type="PANTHER" id="PTHR16040:SF5">
    <property type="entry name" value="BOREALIN-2-RELATED"/>
    <property type="match status" value="1"/>
</dbReference>
<dbReference type="Pfam" id="PF10512">
    <property type="entry name" value="Borealin"/>
    <property type="match status" value="1"/>
</dbReference>
<dbReference type="Pfam" id="PF10444">
    <property type="entry name" value="Nbl1_Borealin_N"/>
    <property type="match status" value="1"/>
</dbReference>